<dbReference type="EMBL" id="X05817">
    <property type="status" value="NOT_ANNOTATED_CDS"/>
    <property type="molecule type" value="Genomic_DNA"/>
</dbReference>
<dbReference type="PIR" id="B27129">
    <property type="entry name" value="W6WLB4"/>
</dbReference>
<dbReference type="PIR" id="B61399">
    <property type="entry name" value="B61399"/>
</dbReference>
<dbReference type="SMR" id="P08350"/>
<dbReference type="Proteomes" id="UP000007613">
    <property type="component" value="Segment"/>
</dbReference>
<dbReference type="GO" id="GO:0030430">
    <property type="term" value="C:host cell cytoplasm"/>
    <property type="evidence" value="ECO:0007669"/>
    <property type="project" value="UniProtKB-SubCell"/>
</dbReference>
<dbReference type="GO" id="GO:0042025">
    <property type="term" value="C:host cell nucleus"/>
    <property type="evidence" value="ECO:0007669"/>
    <property type="project" value="UniProtKB-SubCell"/>
</dbReference>
<dbReference type="GO" id="GO:0003677">
    <property type="term" value="F:DNA binding"/>
    <property type="evidence" value="ECO:0007669"/>
    <property type="project" value="UniProtKB-UniRule"/>
</dbReference>
<dbReference type="GO" id="GO:0003700">
    <property type="term" value="F:DNA-binding transcription factor activity"/>
    <property type="evidence" value="ECO:0007669"/>
    <property type="project" value="UniProtKB-UniRule"/>
</dbReference>
<dbReference type="GO" id="GO:0019904">
    <property type="term" value="F:protein domain specific binding"/>
    <property type="evidence" value="ECO:0007669"/>
    <property type="project" value="UniProtKB-UniRule"/>
</dbReference>
<dbReference type="GO" id="GO:0008270">
    <property type="term" value="F:zinc ion binding"/>
    <property type="evidence" value="ECO:0007669"/>
    <property type="project" value="UniProtKB-KW"/>
</dbReference>
<dbReference type="GO" id="GO:0006351">
    <property type="term" value="P:DNA-templated transcription"/>
    <property type="evidence" value="ECO:0007669"/>
    <property type="project" value="UniProtKB-UniRule"/>
</dbReference>
<dbReference type="GO" id="GO:0039645">
    <property type="term" value="P:symbiont-mediated perturbation of host cell cycle G1/S transition checkpoint"/>
    <property type="evidence" value="ECO:0007669"/>
    <property type="project" value="UniProtKB-UniRule"/>
</dbReference>
<dbReference type="GO" id="GO:0052170">
    <property type="term" value="P:symbiont-mediated suppression of host innate immune response"/>
    <property type="evidence" value="ECO:0007669"/>
    <property type="project" value="UniProtKB-KW"/>
</dbReference>
<dbReference type="GO" id="GO:0039502">
    <property type="term" value="P:symbiont-mediated suppression of host type I interferon-mediated signaling pathway"/>
    <property type="evidence" value="ECO:0007669"/>
    <property type="project" value="UniProtKB-UniRule"/>
</dbReference>
<dbReference type="Gene3D" id="3.30.160.330">
    <property type="match status" value="1"/>
</dbReference>
<dbReference type="HAMAP" id="MF_04004">
    <property type="entry name" value="PPV_E7"/>
    <property type="match status" value="1"/>
</dbReference>
<dbReference type="InterPro" id="IPR000148">
    <property type="entry name" value="Papilloma_E7"/>
</dbReference>
<dbReference type="Pfam" id="PF00527">
    <property type="entry name" value="E7"/>
    <property type="match status" value="1"/>
</dbReference>
<dbReference type="PIRSF" id="PIRSF003407">
    <property type="entry name" value="Papvi_E7"/>
    <property type="match status" value="1"/>
</dbReference>
<dbReference type="SUPFAM" id="SSF161234">
    <property type="entry name" value="E7 C-terminal domain-like"/>
    <property type="match status" value="1"/>
</dbReference>
<comment type="function">
    <text evidence="1">Plays a role in viral genome replication by driving entry of quiescent cells into the cell cycle. Stimulation of progression from G1 to S phase allows the virus to efficiently use the cellular DNA replicating machinery to achieve viral genome replication. E7 protein has both transforming and trans-activating activities. Induces the disassembly of the E2F1 transcription factor from RB1, with subsequent transcriptional activation of E2F1-regulated S-phase genes. Interferes with host histone deacetylation mediated by HDAC1 and HDAC2, leading to transcription activation. Also plays a role in the inhibition of both antiviral and antiproliferative functions of host interferon alpha. Interaction with host TMEM173/STING impairs the ability of TMEM173/STING to sense cytosolic DNA and promote the production of type I interferon (IFN-alpha and IFN-beta).</text>
</comment>
<comment type="subunit">
    <text evidence="1">Homodimer. Homooligomer. Interacts with host RB1; this interaction induces dissociation of RB1-E2F1 complex thereby disrupting RB1 activity. Interacts with host EP300; this interaction represses EP300 transcriptional activity. Interacts with protein E2; this interaction inhibits E7 oncogenic activity. Interacts with host TMEM173/STING; this interaction impairs the ability of TMEM173/STING to sense cytosolic DNA and promote the production of type I interferon (IFN-alpha and IFN-beta).</text>
</comment>
<comment type="subcellular location">
    <subcellularLocation>
        <location evidence="1">Host cytoplasm</location>
    </subcellularLocation>
    <subcellularLocation>
        <location evidence="1">Host nucleus</location>
    </subcellularLocation>
    <text evidence="1">Predominantly found in the host nucleus.</text>
</comment>
<comment type="domain">
    <text evidence="1">The E7 terminal domain is an intrinsically disordered domain, whose flexibility and conformational transitions confer target adaptability to the oncoprotein. It allows adaptation to a variety of protein targets and exposes the PEST degradation sequence that regulates its turnover in the cell.</text>
</comment>
<comment type="PTM">
    <text evidence="1">Highly phosphorylated.</text>
</comment>
<comment type="similarity">
    <text evidence="1">Belongs to the papillomaviridae E7 protein family.</text>
</comment>
<comment type="sequence caution" evidence="2">
    <conflict type="frameshift">
        <sequence resource="EMBL" id="X05817"/>
    </conflict>
</comment>
<protein>
    <recommendedName>
        <fullName evidence="1">Protein E7</fullName>
    </recommendedName>
</protein>
<proteinExistence type="inferred from homology"/>
<organism>
    <name type="scientific">Bos taurus papillomavirus 4</name>
    <name type="common">Bovine papillomavirus 4</name>
    <dbReference type="NCBI Taxonomy" id="10562"/>
    <lineage>
        <taxon>Viruses</taxon>
        <taxon>Monodnaviria</taxon>
        <taxon>Shotokuvirae</taxon>
        <taxon>Cossaviricota</taxon>
        <taxon>Papovaviricetes</taxon>
        <taxon>Zurhausenvirales</taxon>
        <taxon>Papillomaviridae</taxon>
        <taxon>Firstpapillomavirinae</taxon>
        <taxon>Xipapillomavirus</taxon>
        <taxon>Xipapillomavirus 1</taxon>
    </lineage>
</organism>
<organismHost>
    <name type="scientific">Bos taurus</name>
    <name type="common">Bovine</name>
    <dbReference type="NCBI Taxonomy" id="9913"/>
</organismHost>
<keyword id="KW-0010">Activator</keyword>
<keyword id="KW-0238">DNA-binding</keyword>
<keyword id="KW-0244">Early protein</keyword>
<keyword id="KW-1078">G1/S host cell cycle checkpoint dysregulation by virus</keyword>
<keyword id="KW-1035">Host cytoplasm</keyword>
<keyword id="KW-1048">Host nucleus</keyword>
<keyword id="KW-0945">Host-virus interaction</keyword>
<keyword id="KW-1090">Inhibition of host innate immune response by virus</keyword>
<keyword id="KW-1114">Inhibition of host interferon signaling pathway by virus</keyword>
<keyword id="KW-0922">Interferon antiviral system evasion</keyword>
<keyword id="KW-0479">Metal-binding</keyword>
<keyword id="KW-1121">Modulation of host cell cycle by virus</keyword>
<keyword id="KW-0553">Oncogene</keyword>
<keyword id="KW-0804">Transcription</keyword>
<keyword id="KW-0805">Transcription regulation</keyword>
<keyword id="KW-0899">Viral immunoevasion</keyword>
<keyword id="KW-0862">Zinc</keyword>
<keyword id="KW-0863">Zinc-finger</keyword>
<name>VE7_BPV4</name>
<feature type="chain" id="PRO_0000133395" description="Protein E7">
    <location>
        <begin position="1"/>
        <end position="98"/>
    </location>
</feature>
<feature type="zinc finger region" evidence="1">
    <location>
        <begin position="47"/>
        <end position="83"/>
    </location>
</feature>
<feature type="region of interest" description="E7 terminal domain" evidence="1">
    <location>
        <begin position="1"/>
        <end position="37"/>
    </location>
</feature>
<feature type="short sequence motif" description="LXCXE motif; interaction with host RB1 and TMEM173/STING" evidence="1">
    <location>
        <begin position="24"/>
        <end position="28"/>
    </location>
</feature>
<feature type="short sequence motif" description="Nuclear export signal" evidence="1">
    <location>
        <begin position="65"/>
        <end position="73"/>
    </location>
</feature>
<gene>
    <name evidence="1" type="primary">E7</name>
</gene>
<sequence>MKGQNVTLQDIAIELEDTISPINLHCEEEIETEEVDTPNPFAITATCYACEQVLRLAVVTSTEGIHQLQQLLFDNLFLLCAACSKQVFCNRRPERNGP</sequence>
<accession>P08350</accession>
<accession>Q7LZV7</accession>
<evidence type="ECO:0000255" key="1">
    <source>
        <dbReference type="HAMAP-Rule" id="MF_04004"/>
    </source>
</evidence>
<evidence type="ECO:0000305" key="2"/>
<reference key="1">
    <citation type="journal article" date="1987" name="J. Gen. Virol.">
        <title>The nucleotide sequence and genome organization of bovine papillomavirus type 4.</title>
        <authorList>
            <person name="Patel K.R."/>
            <person name="Smith K.T."/>
            <person name="Campo M.S."/>
        </authorList>
    </citation>
    <scope>NUCLEOTIDE SEQUENCE [GENOMIC DNA]</scope>
</reference>
<reference key="2">
    <citation type="journal article" date="1991" name="Mol. Carcinog.">
        <title>The B subgroup bovine papillomaviruses lack an identifiable E6 open reading frame.</title>
        <authorList>
            <person name="Jackson M.E."/>
            <person name="Pennie W.D."/>
            <person name="McCaffery R.E."/>
            <person name="Smith K.T."/>
            <person name="Grindlay G.J."/>
            <person name="Campo M.S."/>
        </authorList>
    </citation>
    <scope>NUCLEOTIDE SEQUENCE [GENOMIC DNA]</scope>
</reference>